<reference key="1">
    <citation type="journal article" date="2008" name="Proc. Natl. Acad. Sci. U.S.A.">
        <title>The genome of Clostridium kluyveri, a strict anaerobe with unique metabolic features.</title>
        <authorList>
            <person name="Seedorf H."/>
            <person name="Fricke W.F."/>
            <person name="Veith B."/>
            <person name="Brueggemann H."/>
            <person name="Liesegang H."/>
            <person name="Strittmatter A."/>
            <person name="Miethke M."/>
            <person name="Buckel W."/>
            <person name="Hinderberger J."/>
            <person name="Li F."/>
            <person name="Hagemeier C."/>
            <person name="Thauer R.K."/>
            <person name="Gottschalk G."/>
        </authorList>
    </citation>
    <scope>NUCLEOTIDE SEQUENCE [LARGE SCALE GENOMIC DNA]</scope>
    <source>
        <strain>ATCC 8527 / DSM 555 / NBRC 12016 / NCIMB 10680 / K1</strain>
    </source>
</reference>
<organism>
    <name type="scientific">Clostridium kluyveri (strain ATCC 8527 / DSM 555 / NBRC 12016 / NCIMB 10680 / K1)</name>
    <dbReference type="NCBI Taxonomy" id="431943"/>
    <lineage>
        <taxon>Bacteria</taxon>
        <taxon>Bacillati</taxon>
        <taxon>Bacillota</taxon>
        <taxon>Clostridia</taxon>
        <taxon>Eubacteriales</taxon>
        <taxon>Clostridiaceae</taxon>
        <taxon>Clostridium</taxon>
    </lineage>
</organism>
<proteinExistence type="inferred from homology"/>
<dbReference type="EMBL" id="CP000673">
    <property type="protein sequence ID" value="EDK32302.1"/>
    <property type="molecule type" value="Genomic_DNA"/>
</dbReference>
<dbReference type="RefSeq" id="WP_011988827.1">
    <property type="nucleotide sequence ID" value="NC_009706.1"/>
</dbReference>
<dbReference type="SMR" id="A5N4S1"/>
<dbReference type="STRING" id="431943.CKL_0248"/>
<dbReference type="KEGG" id="ckl:CKL_0248"/>
<dbReference type="eggNOG" id="COG0257">
    <property type="taxonomic scope" value="Bacteria"/>
</dbReference>
<dbReference type="HOGENOM" id="CLU_135723_6_2_9"/>
<dbReference type="Proteomes" id="UP000002411">
    <property type="component" value="Chromosome"/>
</dbReference>
<dbReference type="GO" id="GO:0005737">
    <property type="term" value="C:cytoplasm"/>
    <property type="evidence" value="ECO:0007669"/>
    <property type="project" value="UniProtKB-ARBA"/>
</dbReference>
<dbReference type="GO" id="GO:1990904">
    <property type="term" value="C:ribonucleoprotein complex"/>
    <property type="evidence" value="ECO:0007669"/>
    <property type="project" value="UniProtKB-KW"/>
</dbReference>
<dbReference type="GO" id="GO:0005840">
    <property type="term" value="C:ribosome"/>
    <property type="evidence" value="ECO:0007669"/>
    <property type="project" value="UniProtKB-KW"/>
</dbReference>
<dbReference type="GO" id="GO:0003735">
    <property type="term" value="F:structural constituent of ribosome"/>
    <property type="evidence" value="ECO:0007669"/>
    <property type="project" value="InterPro"/>
</dbReference>
<dbReference type="GO" id="GO:0006412">
    <property type="term" value="P:translation"/>
    <property type="evidence" value="ECO:0007669"/>
    <property type="project" value="UniProtKB-UniRule"/>
</dbReference>
<dbReference type="HAMAP" id="MF_00251">
    <property type="entry name" value="Ribosomal_bL36"/>
    <property type="match status" value="1"/>
</dbReference>
<dbReference type="InterPro" id="IPR000473">
    <property type="entry name" value="Ribosomal_bL36"/>
</dbReference>
<dbReference type="InterPro" id="IPR035977">
    <property type="entry name" value="Ribosomal_bL36_sp"/>
</dbReference>
<dbReference type="NCBIfam" id="TIGR01022">
    <property type="entry name" value="rpmJ_bact"/>
    <property type="match status" value="1"/>
</dbReference>
<dbReference type="PANTHER" id="PTHR42888">
    <property type="entry name" value="50S RIBOSOMAL PROTEIN L36, CHLOROPLASTIC"/>
    <property type="match status" value="1"/>
</dbReference>
<dbReference type="PANTHER" id="PTHR42888:SF1">
    <property type="entry name" value="LARGE RIBOSOMAL SUBUNIT PROTEIN BL36C"/>
    <property type="match status" value="1"/>
</dbReference>
<dbReference type="Pfam" id="PF00444">
    <property type="entry name" value="Ribosomal_L36"/>
    <property type="match status" value="1"/>
</dbReference>
<dbReference type="SUPFAM" id="SSF57840">
    <property type="entry name" value="Ribosomal protein L36"/>
    <property type="match status" value="1"/>
</dbReference>
<dbReference type="PROSITE" id="PS00828">
    <property type="entry name" value="RIBOSOMAL_L36"/>
    <property type="match status" value="1"/>
</dbReference>
<protein>
    <recommendedName>
        <fullName evidence="1">Large ribosomal subunit protein bL36</fullName>
    </recommendedName>
    <alternativeName>
        <fullName evidence="2">50S ribosomal protein L36</fullName>
    </alternativeName>
</protein>
<comment type="similarity">
    <text evidence="1">Belongs to the bacterial ribosomal protein bL36 family.</text>
</comment>
<name>RL36_CLOK5</name>
<sequence length="37" mass="4347">MKVRPSVKPICEKCKIIKRKGRVMVICENPRHKQKQG</sequence>
<evidence type="ECO:0000255" key="1">
    <source>
        <dbReference type="HAMAP-Rule" id="MF_00251"/>
    </source>
</evidence>
<evidence type="ECO:0000305" key="2"/>
<keyword id="KW-1185">Reference proteome</keyword>
<keyword id="KW-0687">Ribonucleoprotein</keyword>
<keyword id="KW-0689">Ribosomal protein</keyword>
<gene>
    <name evidence="1" type="primary">rpmJ</name>
    <name type="ordered locus">CKL_0248</name>
</gene>
<accession>A5N4S1</accession>
<feature type="chain" id="PRO_1000078468" description="Large ribosomal subunit protein bL36">
    <location>
        <begin position="1"/>
        <end position="37"/>
    </location>
</feature>